<reference key="1">
    <citation type="journal article" date="2014" name="Gene">
        <title>Recruitment and diversification of an ecdysozoan family of neuropeptide hormones for black widow spider venom expression.</title>
        <authorList>
            <person name="McCowan C."/>
            <person name="Garb J.E."/>
        </authorList>
    </citation>
    <scope>NUCLEOTIDE SEQUENCE [MRNA]</scope>
    <source>
        <tissue>Venom gland</tissue>
    </source>
</reference>
<proteinExistence type="inferred from homology"/>
<name>TXAC_STEGR</name>
<feature type="signal peptide" evidence="2">
    <location>
        <begin position="1"/>
        <end position="18"/>
    </location>
</feature>
<feature type="chain" id="PRO_0000432883" description="Alpha-latrotoxin associated low molecular weight protein SGV150-311">
    <location>
        <begin position="19"/>
        <end position="91"/>
    </location>
</feature>
<feature type="sequence conflict" description="In Ref. 1; AHC13263/AHC13264." evidence="4" ref="1">
    <original>D</original>
    <variation>G</variation>
    <location>
        <position position="28"/>
    </location>
</feature>
<feature type="sequence conflict" description="In Ref. 1; AHC13266." evidence="4" ref="1">
    <original>N</original>
    <variation>K</variation>
    <location>
        <position position="38"/>
    </location>
</feature>
<feature type="sequence conflict" description="In Ref. 1; AHC13267." evidence="4" ref="1">
    <original>S</original>
    <variation>A</variation>
    <location>
        <position position="76"/>
    </location>
</feature>
<comment type="function">
    <text evidence="1">May increase the toxicity of alpha-latrotoxin and/or other venom components. Is non-toxic to mice and to the cockroach Periplaneta americana.</text>
</comment>
<comment type="subcellular location">
    <subcellularLocation>
        <location evidence="1">Secreted</location>
    </subcellularLocation>
</comment>
<comment type="tissue specificity">
    <text evidence="4">Expressed by the venom gland.</text>
</comment>
<comment type="similarity">
    <text>Belongs to the arthropod CHH/MIH/GIH/VIH hormone family.</text>
</comment>
<sequence>MNVLHFLILLMSVVSVFCINPEDIGCDDSITPEKFAENDAKCVQCKEQFEETNMLEQCREDCFKGKFFRSCVDHLSGAYDEKDDVEAPPPE</sequence>
<dbReference type="EMBL" id="KF751518">
    <property type="protein sequence ID" value="AHC13263.1"/>
    <property type="molecule type" value="mRNA"/>
</dbReference>
<dbReference type="EMBL" id="KF751519">
    <property type="protein sequence ID" value="AHC13264.1"/>
    <property type="molecule type" value="mRNA"/>
</dbReference>
<dbReference type="EMBL" id="KF751520">
    <property type="protein sequence ID" value="AHC13265.1"/>
    <property type="molecule type" value="mRNA"/>
</dbReference>
<dbReference type="EMBL" id="KF751521">
    <property type="protein sequence ID" value="AHC13266.1"/>
    <property type="molecule type" value="mRNA"/>
</dbReference>
<dbReference type="EMBL" id="KF751522">
    <property type="protein sequence ID" value="AHC13267.1"/>
    <property type="molecule type" value="mRNA"/>
</dbReference>
<dbReference type="SMR" id="V9QFG9"/>
<dbReference type="GO" id="GO:0005576">
    <property type="term" value="C:extracellular region"/>
    <property type="evidence" value="ECO:0007669"/>
    <property type="project" value="UniProtKB-SubCell"/>
</dbReference>
<dbReference type="Gene3D" id="1.10.2010.10">
    <property type="entry name" value="Crustacean CHH/MIH/GIH neurohormone"/>
    <property type="match status" value="1"/>
</dbReference>
<dbReference type="InterPro" id="IPR031098">
    <property type="entry name" value="Crust_neurohorm"/>
</dbReference>
<dbReference type="InterPro" id="IPR035957">
    <property type="entry name" value="Crust_neurohorm_sf"/>
</dbReference>
<dbReference type="Pfam" id="PF01147">
    <property type="entry name" value="Crust_neurohorm"/>
    <property type="match status" value="1"/>
</dbReference>
<dbReference type="SUPFAM" id="SSF81778">
    <property type="entry name" value="Crustacean CHH/MIH/GIH neurohormone"/>
    <property type="match status" value="1"/>
</dbReference>
<keyword id="KW-0964">Secreted</keyword>
<keyword id="KW-0732">Signal</keyword>
<evidence type="ECO:0000250" key="1">
    <source>
        <dbReference type="UniProtKB" id="P49125"/>
    </source>
</evidence>
<evidence type="ECO:0000255" key="2"/>
<evidence type="ECO:0000303" key="3">
    <source>
    </source>
</evidence>
<evidence type="ECO:0000305" key="4"/>
<organism>
    <name type="scientific">Steatoda grossa</name>
    <name type="common">False black widow</name>
    <dbReference type="NCBI Taxonomy" id="256750"/>
    <lineage>
        <taxon>Eukaryota</taxon>
        <taxon>Metazoa</taxon>
        <taxon>Ecdysozoa</taxon>
        <taxon>Arthropoda</taxon>
        <taxon>Chelicerata</taxon>
        <taxon>Arachnida</taxon>
        <taxon>Araneae</taxon>
        <taxon>Araneomorphae</taxon>
        <taxon>Entelegynae</taxon>
        <taxon>Araneoidea</taxon>
        <taxon>Theridiidae</taxon>
        <taxon>Steatoda</taxon>
    </lineage>
</organism>
<protein>
    <recommendedName>
        <fullName evidence="3">Alpha-latrotoxin associated low molecular weight protein SGV150-311</fullName>
        <shortName evidence="3">Alpha-latrotoxin-associated LMWP SGV150-311</shortName>
    </recommendedName>
    <alternativeName>
        <fullName evidence="3">Latrodectin</fullName>
    </alternativeName>
</protein>
<accession>V9QFG9</accession>
<accession>V9QEJ6</accession>
<accession>V9QER8</accession>
<accession>V9QF75</accession>